<organism>
    <name type="scientific">Exiguobacterium sp. (strain ATCC BAA-1283 / AT1b)</name>
    <dbReference type="NCBI Taxonomy" id="360911"/>
    <lineage>
        <taxon>Bacteria</taxon>
        <taxon>Bacillati</taxon>
        <taxon>Bacillota</taxon>
        <taxon>Bacilli</taxon>
        <taxon>Bacillales</taxon>
        <taxon>Bacillales Family XII. Incertae Sedis</taxon>
        <taxon>Exiguobacterium</taxon>
    </lineage>
</organism>
<gene>
    <name evidence="1" type="primary">lutC</name>
    <name type="ordered locus">EAT1b_1959</name>
</gene>
<comment type="function">
    <text evidence="1">Is involved in L-lactate degradation and allows cells to grow with lactate as the sole carbon source.</text>
</comment>
<comment type="similarity">
    <text evidence="1">Belongs to the LutC/YkgG family.</text>
</comment>
<accession>C4L0S0</accession>
<sequence>MNPGTITNREDFLQRIAKQLGREVKLTPPKREYTHRPQDEVLKGASEEELLETFRMVATRIHTDLVECESAKLDDTLRLLIERYHGARILAENDERISAWAPTTSETFDWWDSSQPEASRELAIRADIGITIADAAFAESATIVQYAMPGRSRTISLLPQDHIAIIPKSVLVPRMTQTAQQLATLDRDGLHSPNGVNFISGPSNSADIEMNLIVGVHGPVRVSYVLVHDL</sequence>
<reference key="1">
    <citation type="journal article" date="2011" name="J. Bacteriol.">
        <title>Complete genome sequence of the Thermophilic Bacterium Exiguobacterium sp. AT1b.</title>
        <authorList>
            <person name="Vishnivetskaya T.A."/>
            <person name="Lucas S."/>
            <person name="Copeland A."/>
            <person name="Lapidus A."/>
            <person name="Glavina del Rio T."/>
            <person name="Dalin E."/>
            <person name="Tice H."/>
            <person name="Bruce D.C."/>
            <person name="Goodwin L.A."/>
            <person name="Pitluck S."/>
            <person name="Saunders E."/>
            <person name="Brettin T."/>
            <person name="Detter C."/>
            <person name="Han C."/>
            <person name="Larimer F."/>
            <person name="Land M.L."/>
            <person name="Hauser L.J."/>
            <person name="Kyrpides N.C."/>
            <person name="Ovchinnikova G."/>
            <person name="Kathariou S."/>
            <person name="Ramaley R.F."/>
            <person name="Rodrigues D.F."/>
            <person name="Hendrix C."/>
            <person name="Richardson P."/>
            <person name="Tiedje J.M."/>
        </authorList>
    </citation>
    <scope>NUCLEOTIDE SEQUENCE [LARGE SCALE GENOMIC DNA]</scope>
    <source>
        <strain>ATCC BAA-1283 / AT1b</strain>
    </source>
</reference>
<proteinExistence type="inferred from homology"/>
<name>LUTC_EXISA</name>
<dbReference type="EMBL" id="CP001615">
    <property type="protein sequence ID" value="ACQ70883.1"/>
    <property type="molecule type" value="Genomic_DNA"/>
</dbReference>
<dbReference type="RefSeq" id="WP_015880442.1">
    <property type="nucleotide sequence ID" value="NC_012673.1"/>
</dbReference>
<dbReference type="SMR" id="C4L0S0"/>
<dbReference type="STRING" id="360911.EAT1b_1959"/>
<dbReference type="KEGG" id="eat:EAT1b_1959"/>
<dbReference type="eggNOG" id="COG1556">
    <property type="taxonomic scope" value="Bacteria"/>
</dbReference>
<dbReference type="HOGENOM" id="CLU_090664_1_0_9"/>
<dbReference type="OrthoDB" id="9794157at2"/>
<dbReference type="Proteomes" id="UP000000716">
    <property type="component" value="Chromosome"/>
</dbReference>
<dbReference type="GO" id="GO:0006089">
    <property type="term" value="P:lactate metabolic process"/>
    <property type="evidence" value="ECO:0007669"/>
    <property type="project" value="UniProtKB-UniRule"/>
</dbReference>
<dbReference type="Gene3D" id="3.40.50.10420">
    <property type="entry name" value="NagB/RpiA/CoA transferase-like"/>
    <property type="match status" value="1"/>
</dbReference>
<dbReference type="HAMAP" id="MF_02104">
    <property type="entry name" value="LutC"/>
    <property type="match status" value="1"/>
</dbReference>
<dbReference type="InterPro" id="IPR024185">
    <property type="entry name" value="FTHF_cligase-like_sf"/>
</dbReference>
<dbReference type="InterPro" id="IPR003741">
    <property type="entry name" value="LUD_dom"/>
</dbReference>
<dbReference type="InterPro" id="IPR022823">
    <property type="entry name" value="LutC"/>
</dbReference>
<dbReference type="InterPro" id="IPR037171">
    <property type="entry name" value="NagB/RpiA_transferase-like"/>
</dbReference>
<dbReference type="PANTHER" id="PTHR43682">
    <property type="entry name" value="LACTATE UTILIZATION PROTEIN C"/>
    <property type="match status" value="1"/>
</dbReference>
<dbReference type="PANTHER" id="PTHR43682:SF1">
    <property type="entry name" value="LACTATE UTILIZATION PROTEIN C"/>
    <property type="match status" value="1"/>
</dbReference>
<dbReference type="Pfam" id="PF02589">
    <property type="entry name" value="LUD_dom"/>
    <property type="match status" value="1"/>
</dbReference>
<dbReference type="SUPFAM" id="SSF100950">
    <property type="entry name" value="NagB/RpiA/CoA transferase-like"/>
    <property type="match status" value="1"/>
</dbReference>
<evidence type="ECO:0000255" key="1">
    <source>
        <dbReference type="HAMAP-Rule" id="MF_02104"/>
    </source>
</evidence>
<protein>
    <recommendedName>
        <fullName evidence="1">Lactate utilization protein C</fullName>
    </recommendedName>
</protein>
<feature type="chain" id="PRO_0000384010" description="Lactate utilization protein C">
    <location>
        <begin position="1"/>
        <end position="230"/>
    </location>
</feature>